<name>CAC1C_RABIT</name>
<sequence>MLRALVQPATPAYQPLPSHLSAETESTCKGTVVHEAQLNHFYISPGGSNYGSPRPAHANMNANAAAGLAPEHIPTPGAALSWQAAIDAARQAKLMGSAGNATISTVSSTQRKRQQYGKPKKQGSTTATRPPRALLCLTLKNPIRRACISIVEWKPFEIIILLTIFANCVALAIYIPFPEDDSNATNSNLERVEYLFLIIFTVEAFLKVIAYGLLFHPNAYLRNGWNLLDFIIVVVGLFSAILEQATKADGANALGGKGAGFDVKALRAFRVLRPLRLVSGVPSLQVVLNSIIKAMVPLLHIALLVLFVIIIYAIIGLELFMGKMHKTCYNQEGVADVPAEDDPSPCALETGHGRQCQNGTVCKPGWDGPKHGITNFDNFAFAMLTVFQCITMEGWTDVLYWMQDAMGYELPWVYFVSLVIFGSFFVLNLVLGVLSGEFSKEREKAKARGDFQKLREKQQLEEDLKGYLDWITQAEDIDPENEDEGMDEEKPRNMSMPTSETESVNTENVAGGDIEGENCGARLAHRISKSKFSRYWRRWNRFCRRKCRAAVKSNVFYWLVIFLVFLNTLTIASEHYNQPHWLTEVQDTANKALLALFTAEMLLKMYSLGLQAYFVSLFNRFDCFIVCGGILETILVETKVMSPLGISVLRCVRLLRIFKITRYWNSLSNLVASLLNSVRSIASLLLLLFLFIIIFSLLGMQLFGGKFNFDEMQTRRSTFDNFPQSLLTVFQILTGEDWNSVMYDGIMAYGGPSFPGMLVCIYFIILFICGNYILLNVFLAIAVDNLADAESLTSAQKEEEEEKERKKLARTASPEKKQEVVGKPALEEAKEEKIELKSITADGESPPTTKINMDDLQPNESEDKSPYPNPETTGEEDEEEPEMPVGPRPRPLSELHLKEKAVPMPEASAFFIFSPNNRFRLQCHRIVNDTIFTNLILFFILLSSISLAAEDPVQHTSFRNHILFYFDIVFTTIFTIEIALKMTAYGAFLHKGSFCRNYFNILDLLVVSVSLISFGIQSSAINVVKILRVLRVLRPLRAINRAKGLKHVVQCVFVAIRTIGNIVIVTTLLQFMFACIGVQLFKGKLYTCSDSSKQTEAECKGNYITYKDGEVDHPIIQPRSWENSKFDFDNVLAAMMALFTVSTFEGWPELLYRSIDSHTEDKGPIYNYRVEISIFFIIYIIIIAFFMMNIFVGFVIVTFQEQGEQEYKNCELDKNQRQCVEYALKARPLRRYIPKNQHQYKVWYVVNSTYFEYLMFVLILLNTICLAMQHYGQSCLFKIAMNILNMLFTGLFTVEMILKLIAFKPKGYFSDPWNVFDFLIVIGSIIDVILSETNPAEHTQCSPSMNAEENSRISITFFRLFRVMRLVKLLSRGEGIRTLLWTFIKSFQALPYVALLIVMLFFIYAVIGMQVFGKIALNDTTEINRNNNFQTFPQAVLLLFRCATGEAWQDIMLACMPGKKCAPESEPHNSTEGETPCGSSFAVFYFISFYMLCAFLIINLFVAVIMDNFDYLTRDWSILGPHHLDEFKRIWAEYDPEAKGRIKHLDVVTLLRRIQPPLGFGKLCPHRVACKRLVSMNMPLNSDGTVMFNATLFALVRTALRIKTEGNLEQANEELRAIIKKIWKRTSMKLLDQVVPPAGDDEVTVGKFYATFLIQEYFRKFKKRKEQGLVGKPSQRNALSLQAGLRTLHDIGPEIRRAISGDLTAEEELDKAMKEAVSAASEDDIFRRAGGLFGNHVSYYQSDSRSAFPQTFTTQRPLHISKAGNNQGDTESPSHEKLVDSTFTPSSYSSTGSNANINNANNTALGRLPRPAGYPSTVSTVEGHGSPLSPAVRAQEAAWKLSSKRCHSQESQIAMACQEGASQDDNYDVRIGEDAECCSEPSLLSTEMLSYQDDENRQLAPPEEEKRDIRLSPKKGFLRSASLGRRASFHLECLKRQKNQGGDISQKTVLPLHLVHHQALAVAGLSPLLQRSHSPTSLPRPCATPPATPGSRGWPPQPIPTLRLEGADSSEKLNSSFPSIHCGSWSGENSPCRGDSSAARRARPVSLTVPSQAGAQGRQFHGSASSLVEAVLISEGLGQFAQDPKFIEVTTQELADACDLTIEEMENAADDILSGGARQSPNGTLLPFVNRRDPGRDRAGQNEQDASGACAPGCGQSEEALADRRAGVSSL</sequence>
<accession>P15381</accession>
<accession>Q03716</accession>
<accession>Q28676</accession>
<accession>Q99243</accession>
<proteinExistence type="evidence at protein level"/>
<keyword id="KW-0002">3D-structure</keyword>
<keyword id="KW-0025">Alternative splicing</keyword>
<keyword id="KW-0106">Calcium</keyword>
<keyword id="KW-0107">Calcium channel</keyword>
<keyword id="KW-0109">Calcium transport</keyword>
<keyword id="KW-0112">Calmodulin-binding</keyword>
<keyword id="KW-1003">Cell membrane</keyword>
<keyword id="KW-0966">Cell projection</keyword>
<keyword id="KW-1015">Disulfide bond</keyword>
<keyword id="KW-0325">Glycoprotein</keyword>
<keyword id="KW-0407">Ion channel</keyword>
<keyword id="KW-0406">Ion transport</keyword>
<keyword id="KW-0472">Membrane</keyword>
<keyword id="KW-0479">Metal-binding</keyword>
<keyword id="KW-0597">Phosphoprotein</keyword>
<keyword id="KW-0628">Postsynaptic cell membrane</keyword>
<keyword id="KW-1185">Reference proteome</keyword>
<keyword id="KW-0677">Repeat</keyword>
<keyword id="KW-0770">Synapse</keyword>
<keyword id="KW-0812">Transmembrane</keyword>
<keyword id="KW-1133">Transmembrane helix</keyword>
<keyword id="KW-0813">Transport</keyword>
<keyword id="KW-0851">Voltage-gated channel</keyword>
<organism>
    <name type="scientific">Oryctolagus cuniculus</name>
    <name type="common">Rabbit</name>
    <dbReference type="NCBI Taxonomy" id="9986"/>
    <lineage>
        <taxon>Eukaryota</taxon>
        <taxon>Metazoa</taxon>
        <taxon>Chordata</taxon>
        <taxon>Craniata</taxon>
        <taxon>Vertebrata</taxon>
        <taxon>Euteleostomi</taxon>
        <taxon>Mammalia</taxon>
        <taxon>Eutheria</taxon>
        <taxon>Euarchontoglires</taxon>
        <taxon>Glires</taxon>
        <taxon>Lagomorpha</taxon>
        <taxon>Leporidae</taxon>
        <taxon>Oryctolagus</taxon>
    </lineage>
</organism>
<gene>
    <name type="primary">CACNA1C</name>
    <name type="synonym">CACH2</name>
    <name type="synonym">CACN2</name>
    <name type="synonym">CACNL1A1</name>
    <name type="synonym">CCHL1A1</name>
</gene>
<protein>
    <recommendedName>
        <fullName>Voltage-dependent L-type calcium channel subunit alpha-1C</fullName>
    </recommendedName>
    <alternativeName>
        <fullName>Calcium channel, L type, alpha-1 polypeptide, isoform 1, cardiac muscle</fullName>
    </alternativeName>
    <alternativeName>
        <fullName>Smooth muscle calcium channel blocker receptor</fullName>
        <shortName>CACB-receptor</shortName>
    </alternativeName>
    <alternativeName>
        <fullName>Voltage-gated calcium channel subunit alpha Cav1.2</fullName>
    </alternativeName>
</protein>
<comment type="function">
    <text evidence="3 4 8 9 10 11 12 13 14 15 17 20 22 23 26">Pore-forming, alpha-1C subunit of the voltage-gated calcium channel that gives rise to L-type calcium currents (PubMed:15615847, PubMed:17525370, PubMed:21127204, PubMed:2169433, PubMed:22649239, PubMed:22928916, PubMed:23145875, PubMed:2474130, PubMed:29363593, PubMed:8232554, PubMed:9278523, PubMed:9502794). Mediates influx of calcium ions into the cytoplasm, and thereby triggers calcium release from the sarcoplasm (PubMed:23145875). Plays an important role in excitation-contraction coupling in the heart (PubMed:17525370, PubMed:22928916, PubMed:23145875). Required for normal heart development and normal regulation of heart rhythm (By similarity). Required for normal contraction of smooth muscle cells in blood vessels and in the intestine. Essential for normal blood pressure regulation via its role in the contraction of arterial smooth muscle cells (By similarity). Long-lasting (L-type) calcium channels belong to the 'high-voltage activated' (HVA) group (Probable).</text>
</comment>
<comment type="catalytic activity">
    <reaction evidence="8 9 10 11 12 13 14 15 16 17 20 22 23">
        <text>Ca(2+)(in) = Ca(2+)(out)</text>
        <dbReference type="Rhea" id="RHEA:29671"/>
        <dbReference type="ChEBI" id="CHEBI:29108"/>
    </reaction>
</comment>
<comment type="activity regulation">
    <text evidence="4 14 15 17 18 22">Inhibited by dihydropyridines (DHP), such as isradipine (PubMed:2474130, PubMed:9278523). Inhibited by nifedipine (PubMed:23145875). Channel activity is regulated by Ca(2+) and calmodulin (PubMed:29363593, PubMed:7491499). Binding of STAC1, STAC2 or STAC3 to a region that overlaps with the calmodulin binding site inhibits channel inactivation by Ca(2+) and calmodulin (PubMed:29363593). Binding of calmodulin or CABP1 at the same regulatory sites results in opposite effects on the channel function (By similarity). Shear stress and pressure increases calcium channel activity (By similarity).</text>
</comment>
<comment type="subunit">
    <text evidence="3 4 8 9 10 12 16 17 19 22 26">Component of a calcium channel complex consisting of a pore-forming alpha subunit (CACNA1C) and ancillary beta, gamma and delta subunits (PubMed:17525370, PubMed:21127204). The channel complex contains alpha, beta, gamma and delta subunits in a 1:1:1:1 ratio, i.e. it contains only one of each type of subunit (Probable). CACNA1C channel activity is modulated by ancillary subunits, such as CACNB1, CACNB2, CACNB3, CACNA2D1 and CACNA2D4 (PubMed:15615847, PubMed:17525370, PubMed:21127204, PubMed:9278523). Interacts with CACNB1 (PubMed:15615847, PubMed:21127204, PubMed:7509046). Interacts with CACNB2 (PubMed:17525370, PubMed:21127204, PubMed:22649239). Identified in a complex with CACNA2D4 and CACNB3. Interacts with CACNB3 (By similarity). Interacts with CACNA2D1 (PubMed:21127204, PubMed:9278523). Interacts with the gamma subunits CACNG4, CACNG6, CACNG7 and CACNG8 (PubMed:21127204). Interacts with CACNA2D4 (By similarity). Interacts with CALM1 (PubMed:29363593). Interacts (via the N-terminus and the C-terminal C and IQ motifs) with CABP1; this inhibits Ca(2+)-dependent channel inactivation. The binding via the C motif is calcium independent whereas the binding via IQ requires the presence of calcium and is mutually exclusive with calmodulin binding (By similarity). The binding to the cytoplasmic N-terminal domain is calcium independent but is essential for the channel modulation. Interacts (via C-terminal CDB motif) with CABP5; in a calcium-dependent manner. Interacts with CIB1; the interaction increases upon cardiomyocytes hypertrophy (By similarity). Interacts with STAC1, STAC2 and STAC3; this inhibits channel inactivation, probably by hindering CALM1 binding (PubMed:25548159, PubMed:29363593).</text>
</comment>
<comment type="subcellular location">
    <subcellularLocation>
        <location evidence="8 9 10 11 12 15 16 20 22 23">Cell membrane</location>
        <topology evidence="26">Multi-pass membrane protein</topology>
    </subcellularLocation>
    <subcellularLocation>
        <location evidence="13 14 17">Cell membrane</location>
        <location evidence="13 14 17">Sarcolemma</location>
        <topology evidence="26">Multi-pass membrane protein</topology>
    </subcellularLocation>
    <subcellularLocation>
        <location evidence="2">Perikaryon</location>
    </subcellularLocation>
    <subcellularLocation>
        <location evidence="2">Postsynaptic density membrane</location>
    </subcellularLocation>
    <subcellularLocation>
        <location evidence="2">Cell projection</location>
        <location evidence="2">Dendrite</location>
    </subcellularLocation>
    <subcellularLocation>
        <location evidence="3">Cell membrane</location>
        <location evidence="3">Sarcolemma</location>
        <location evidence="3">T-tubule</location>
    </subcellularLocation>
    <text evidence="9 13 17">Colocalizes with ryanodine receptors in distinct clusters at the junctional membrane, where the sarcolemma and the sarcoplasmic reticulum are in close contact (PubMed:22928916, PubMed:29363593). The interaction between RRAD and CACNB2 promotes the expression of CACNA1C at the cell membrane (PubMed:17525370).</text>
</comment>
<comment type="alternative products">
    <event type="alternative splicing"/>
    <isoform>
        <id>P15381-1</id>
        <name>1</name>
        <name>CACH2A</name>
        <sequence type="displayed"/>
    </isoform>
    <isoform>
        <id>P15381-2</id>
        <name>2</name>
        <name>CACH2C</name>
        <sequence type="described" ref="VSP_000906"/>
    </isoform>
    <isoform>
        <id>P15381-3</id>
        <name>3</name>
        <name>CACH2D</name>
        <sequence type="described" ref="VSP_000907"/>
    </isoform>
    <isoform>
        <id>P15381-4</id>
        <name>4</name>
        <name>Lung</name>
        <sequence type="described" ref="VSP_000902 VSP_000904 VSP_000905 VSP_000906"/>
    </isoform>
    <isoform>
        <id>P15381-5</id>
        <name>5</name>
        <name>C141</name>
        <sequence type="described" ref="VSP_000902 VSP_000903"/>
    </isoform>
    <text>Additional isoforms seem to exist.</text>
</comment>
<comment type="tissue specificity">
    <text>Expression in cardiac muscle. In lung, expressed in airway and vascular smooth muscle cells.</text>
</comment>
<comment type="domain">
    <text>Each of the four internal repeats contains five hydrophobic transmembrane segments (S1, S2, S3, S5, S6) and one positively charged transmembrane segment (S4). S4 segments probably represent the voltage-sensor and are characterized by a series of positively charged amino acids at every third position.</text>
</comment>
<comment type="domain">
    <text evidence="18">Binding of intracellular calcium through the EF-hand motif inhibits the opening of the channel.</text>
</comment>
<comment type="PTM">
    <text evidence="3 7">Phosphorylation by PKA at Ser-1928 activates the channel (PubMed:1325377). Elevated levels of blood glucose lead to increased phosphorylation by PKA (By similarity).</text>
</comment>
<comment type="similarity">
    <text evidence="26">Belongs to the calcium channel alpha-1 subunit (TC 1.A.1.11) family. CACNA1C subfamily.</text>
</comment>
<reference key="1">
    <citation type="journal article" date="1989" name="Nature">
        <title>Primary structure and functional expression of the cardiac dihydropyridine-sensitive calcium channel.</title>
        <authorList>
            <person name="Mikami A."/>
            <person name="Imoto K."/>
            <person name="Tanabe T."/>
            <person name="Ni Idomme T."/>
            <person name="Mori Y."/>
            <person name="Takeshima H."/>
            <person name="Narumiya S."/>
            <person name="Numa S."/>
        </authorList>
    </citation>
    <scope>NUCLEOTIDE SEQUENCE [MRNA]</scope>
    <scope>FUNCTION</scope>
    <scope>SUBCELLULAR LOCATION</scope>
    <scope>ACTIVITY REGULATION</scope>
    <scope>TRANSPORTER ACTIVITY</scope>
    <source>
        <tissue>Heart</tissue>
    </source>
</reference>
<reference key="2">
    <citation type="journal article" date="1990" name="FEBS Lett.">
        <title>Primary structure and functional expression of a high voltage activated calcium channel from rabbit lung.</title>
        <authorList>
            <person name="Biel M."/>
            <person name="Ruth P."/>
            <person name="Bosse E."/>
            <person name="Hullin R."/>
            <person name="Stuehmer W."/>
            <person name="Flockerzi V."/>
            <person name="Hoffmann F."/>
        </authorList>
    </citation>
    <scope>NUCLEOTIDE SEQUENCE [MRNA]</scope>
    <scope>FUNCTION</scope>
    <scope>SUBCELLULAR LOCATION</scope>
    <scope>TRANSPORTER ACTIVITY</scope>
    <source>
        <tissue>Heart</tissue>
        <tissue>Lung</tissue>
    </source>
</reference>
<reference key="3">
    <citation type="journal article" date="1991" name="Eur. J. Biochem.">
        <title>Tissue-specific expression of high-voltage-activated dihydropyridine-sensitive L-type calcium channels.</title>
        <authorList>
            <person name="Biel M."/>
            <person name="Hullin R."/>
            <person name="Freundner S."/>
            <person name="Singer D."/>
            <person name="Dascal N."/>
            <person name="Flockerzi V."/>
            <person name="Hofmann F."/>
        </authorList>
    </citation>
    <scope>NUCLEOTIDE SEQUENCE [MRNA] OF 1-98 (ISOFORM 5)</scope>
    <source>
        <tissue>Heart muscle</tissue>
    </source>
</reference>
<reference key="4">
    <citation type="journal article" date="1990" name="J. Biol. Chem.">
        <title>Molecular diversity of L-type calcium channels. Evidence for alternative splicing of the transcripts of three non-allelic genes.</title>
        <authorList>
            <person name="Perez-Reyes E."/>
            <person name="Wei X."/>
            <person name="Castellano A."/>
            <person name="Birnbaumer L."/>
        </authorList>
    </citation>
    <scope>NUCLEOTIDE SEQUENCE [MRNA] OF 1192-1485 (ISOFORM 2)</scope>
    <source>
        <tissue>Heart</tissue>
    </source>
</reference>
<reference key="5">
    <citation type="journal article" date="1993" name="Nature">
        <title>Molecular determinants of Ca2+ selectivity and ion permeation in L-type Ca2+ channels.</title>
        <authorList>
            <person name="Yang J."/>
            <person name="Ellinor P.T."/>
            <person name="Sather W.A."/>
            <person name="Zhang J.-F."/>
            <person name="Tsien R.W."/>
        </authorList>
    </citation>
    <scope>FUNCTION</scope>
    <scope>SUBCELLULAR LOCATION</scope>
    <scope>MUTAGENESIS</scope>
    <scope>CALCIUM-BINDING</scope>
    <scope>SITE</scope>
    <scope>TRANSPORTER ACTIVITY</scope>
</reference>
<reference key="6">
    <citation type="journal article" date="1998" name="J. Neurosci.">
        <title>A mutation affecting dihydropyridine-sensitive current levels and activation kinetics in Drosophila muscle and mammalian heart calcium channels.</title>
        <authorList>
            <person name="Ren D."/>
            <person name="Xu H."/>
            <person name="Eberl D.F."/>
            <person name="Chopra M."/>
            <person name="Hall L.M."/>
        </authorList>
    </citation>
    <scope>FUNCTION</scope>
    <scope>SUBCELLULAR LOCATION</scope>
    <scope>MUTAGENESIS OF CYS-168</scope>
    <scope>TRANSPORTER ACTIVITY</scope>
</reference>
<reference key="7">
    <citation type="journal article" date="1992" name="FEBS Lett.">
        <title>Cyclic AMP-dependent phosphorylation and regulation of the cardiac dihydropyridine-sensitive Ca channel.</title>
        <authorList>
            <person name="Yoshida A."/>
            <person name="Takahashi M."/>
            <person name="Nishimura S."/>
            <person name="Takeshima H."/>
            <person name="Kokubun S."/>
        </authorList>
    </citation>
    <scope>PHOSPHORYLATION BY PKA</scope>
</reference>
<reference key="8">
    <citation type="journal article" date="1994" name="Nature">
        <title>Calcium channel beta-subunit binds to a conserved motif in the I-II cytoplasmic linker of the alpha 1-subunit.</title>
        <authorList>
            <person name="Pragnell M."/>
            <person name="de Waard M."/>
            <person name="Mori Y."/>
            <person name="Tanabe T."/>
            <person name="Snutch T.P."/>
            <person name="Campbell K.P."/>
        </authorList>
    </citation>
    <scope>BETA-SUBUNIT BINDING DOMAIN</scope>
    <scope>INTERACTION WITH CACNB1</scope>
</reference>
<reference key="9">
    <citation type="journal article" date="1995" name="Science">
        <title>Essential Ca(2+)-binding motif for Ca(2+)-sensitive inactivation of L-type Ca2+ channels.</title>
        <authorList>
            <person name="de Leon M."/>
            <person name="Wang Y."/>
            <person name="Jones L."/>
            <person name="Perez-Reyes E."/>
            <person name="Wei X."/>
            <person name="Soong T.W."/>
            <person name="Snutch T.P."/>
            <person name="Yue D.T."/>
        </authorList>
    </citation>
    <scope>EF-HAND MOTIF AND CALCIUM INACTIVATION</scope>
    <scope>ACTIVITY REGULATION</scope>
</reference>
<reference key="10">
    <citation type="journal article" date="1996" name="Biochemistry">
        <title>Specific phosphorylation of a site in the full-length form of the alpha 1 subunit of the cardiac L-type calcium channel by adenosine 3',5'-cyclic monophosphate-dependent protein kinase.</title>
        <authorList>
            <person name="De Jongh K.S."/>
            <person name="Murphy B.J."/>
            <person name="Colvin A.A."/>
            <person name="Hell J.W."/>
            <person name="Takahashi M."/>
            <person name="Catterall W.A."/>
        </authorList>
    </citation>
    <scope>PHOSPHORYLATION AT SER-1928 BY PKA</scope>
</reference>
<reference key="11">
    <citation type="journal article" date="1997" name="J. Neurosci.">
        <title>Dissection of functional domains of the voltage-dependent Ca2+ channel alpha2delta subunit.</title>
        <authorList>
            <person name="Felix R."/>
            <person name="Gurnett C.A."/>
            <person name="De Waard M."/>
            <person name="Campbell K.P."/>
        </authorList>
    </citation>
    <scope>FUNCTION</scope>
    <scope>ACTIVITY REGULATION</scope>
    <scope>SUBCELLULAR LOCATION</scope>
    <scope>SUBUNIT</scope>
    <scope>INTERACTION WITH CACNA2D1</scope>
    <scope>TRANSPORTER ACTIVITY</scope>
</reference>
<reference key="12">
    <citation type="journal article" date="2005" name="Am. J. Physiol.">
        <title>Unique modulation of L-type Ca2+ channels by short auxiliary beta1d subunit present in cardiac muscle.</title>
        <authorList>
            <person name="Cohen R.M."/>
            <person name="Foell J.D."/>
            <person name="Balijepalli R.C."/>
            <person name="Shah V."/>
            <person name="Hell J.W."/>
            <person name="Kamp T.J."/>
        </authorList>
    </citation>
    <scope>INTERACTION WITH CACNB1</scope>
    <scope>FUNCTION</scope>
    <scope>SUBCELLULAR LOCATION</scope>
    <scope>TRANSPORTER ACTIVITY</scope>
</reference>
<reference key="13">
    <citation type="journal article" date="2007" name="Circ. Res.">
        <title>Dominant negative suppression of Rad leads to QT prolongation and causes ventricular arrhythmias via modulation of L-type Ca2+ channels in the heart.</title>
        <authorList>
            <person name="Yada H."/>
            <person name="Murata M."/>
            <person name="Shimoda K."/>
            <person name="Yuasa S."/>
            <person name="Kawaguchi H."/>
            <person name="Ieda M."/>
            <person name="Adachi T."/>
            <person name="Murata M."/>
            <person name="Ogawa S."/>
            <person name="Fukuda K."/>
        </authorList>
    </citation>
    <scope>SUBCELLULAR LOCATION</scope>
    <scope>INTERACTION WITH CACNB2</scope>
    <scope>FUNCTION</scope>
    <scope>TRANSPORTER ACTIVITY</scope>
</reference>
<reference key="14">
    <citation type="journal article" date="2011" name="FASEB J.">
        <title>Cardiac L-type calcium channel (Cav1.2) associates with gamma subunits.</title>
        <authorList>
            <person name="Yang L."/>
            <person name="Katchman A."/>
            <person name="Morrow J.P."/>
            <person name="Doshi D."/>
            <person name="Marx S.O."/>
        </authorList>
    </citation>
    <scope>FUNCTION</scope>
    <scope>SUBCELLULAR LOCATION</scope>
    <scope>SUBUNIT</scope>
    <scope>INTERACTION WITH CACNB1; CACNB2; CACNA2D1; CACNG4; CACNG6; CACNG7 AND CACNG8</scope>
    <scope>TRANSPORTER ACTIVITY</scope>
</reference>
<reference key="15">
    <citation type="journal article" date="2012" name="Biochem. J.">
        <title>The proximal C-terminus of alpha(1C) subunits is necessary for junctional membrane targeting of cardiac L-type calcium channels.</title>
        <authorList>
            <person name="Nakada T."/>
            <person name="Flucher B.E."/>
            <person name="Kashihara T."/>
            <person name="Sheng X."/>
            <person name="Shibazaki T."/>
            <person name="Horiuchi-Hirose M."/>
            <person name="Gomi S."/>
            <person name="Hirose M."/>
            <person name="Yamada M."/>
        </authorList>
    </citation>
    <scope>FUNCTION</scope>
    <scope>SUBCELLULAR LOCATION</scope>
    <scope>MUTAGENESIS OF 1681-LEU--GLY-1684; 1685-LEU--LEU-1688 AND 1697-ARG--SER-1700</scope>
    <scope>TRANSPORTER ACTIVITY</scope>
</reference>
<reference key="16">
    <citation type="journal article" date="2012" name="Biochemistry">
        <title>Voltage-driven Ca(2+) binding at the L-type Ca(2+) channel triggers cardiac excitation-contraction coupling prior to Ca(2+) influx.</title>
        <authorList>
            <person name="Gez L.S."/>
            <person name="Hagalili Y."/>
            <person name="Shainberg A."/>
            <person name="Atlas D."/>
        </authorList>
    </citation>
    <scope>FUNCTION</scope>
    <scope>ACTIVITY REGULATION</scope>
    <scope>SUBCELLULAR LOCATION</scope>
    <scope>MUTAGENESIS OF GLU-393; GLU-736; LEU-775; THR-1066; GLU-1145 AND GLU-1446</scope>
    <scope>TRANSPORTER ACTIVITY</scope>
</reference>
<reference key="17">
    <citation type="journal article" date="2015" name="Proc. Natl. Acad. Sci. U.S.A.">
        <title>Stac adaptor proteins regulate trafficking and function of muscle and neuronal L-type Ca2+ channels.</title>
        <authorList>
            <person name="Polster A."/>
            <person name="Perni S."/>
            <person name="Bichraoui H."/>
            <person name="Beam K.G."/>
        </authorList>
    </citation>
    <scope>FUNCTION</scope>
    <scope>SUBCELLULAR LOCATION</scope>
    <scope>INTERACTION WITH STAC2 AND STAC3</scope>
    <scope>TRANSPORTER ACTIVITY</scope>
</reference>
<reference key="18">
    <citation type="journal article" date="2018" name="Proc. Natl. Acad. Sci. U.S.A.">
        <title>STAC proteins associate to the IQ domain of CaV1.2 and inhibit calcium-dependent inactivation.</title>
        <authorList>
            <person name="Campiglio M."/>
            <person name="Coste de Bagneaux P."/>
            <person name="Ortner N.J."/>
            <person name="Tuluc P."/>
            <person name="Van Petegem F."/>
            <person name="Flucher B.E."/>
        </authorList>
    </citation>
    <scope>FUNCTION</scope>
    <scope>ACTIVITY REGULATION</scope>
    <scope>INTERACTION WITH STAC1; STAC2 AND STAC3</scope>
    <scope>SUBCELLULAR LOCATION</scope>
    <scope>MUTAGENESIS OF PHE-1648; ILE-1654; PHE-1658 AND ARG-1659</scope>
    <scope>TRANSPORTER ACTIVITY</scope>
</reference>
<reference evidence="27" key="19">
    <citation type="journal article" date="2012" name="J. Neurosci.">
        <title>The role of a voltage-dependent Ca2+ channel intracellular linker: a structure-function analysis.</title>
        <authorList>
            <person name="Almagor L."/>
            <person name="Chomsky-Hecht O."/>
            <person name="Ben-Mocha A."/>
            <person name="Hendin-Barak D."/>
            <person name="Dascal N."/>
            <person name="Hirsch J.A."/>
        </authorList>
    </citation>
    <scope>X-RAY CRYSTALLOGRAPHY (1.95 ANGSTROMS) OF 435-539 IN COMPLEX WITH CACNB2</scope>
    <scope>FUNCTION</scope>
    <scope>SUBCELLULAR LOCATION</scope>
    <scope>MUTAGENESIS OF GLY-449</scope>
    <scope>TRANSPORTER ACTIVITY</scope>
</reference>
<dbReference type="EMBL" id="X15539">
    <property type="protein sequence ID" value="CAA33546.1"/>
    <property type="molecule type" value="mRNA"/>
</dbReference>
<dbReference type="EMBL" id="X55763">
    <property type="protein sequence ID" value="CAA39289.1"/>
    <property type="molecule type" value="mRNA"/>
</dbReference>
<dbReference type="EMBL" id="X60782">
    <property type="protein sequence ID" value="CAA43196.1"/>
    <property type="molecule type" value="mRNA"/>
</dbReference>
<dbReference type="EMBL" id="M57974">
    <property type="protein sequence ID" value="AAA31182.1"/>
    <property type="molecule type" value="mRNA"/>
</dbReference>
<dbReference type="PIR" id="S05054">
    <property type="entry name" value="S05054"/>
</dbReference>
<dbReference type="PIR" id="S11339">
    <property type="entry name" value="S11339"/>
</dbReference>
<dbReference type="RefSeq" id="NP_001129994.1">
    <molecule id="P15381-1"/>
    <property type="nucleotide sequence ID" value="NM_001136522.1"/>
</dbReference>
<dbReference type="RefSeq" id="XP_051705865.1">
    <molecule id="P15381-2"/>
    <property type="nucleotide sequence ID" value="XM_051849905.2"/>
</dbReference>
<dbReference type="RefSeq" id="XP_051705871.1">
    <molecule id="P15381-4"/>
    <property type="nucleotide sequence ID" value="XM_051849911.2"/>
</dbReference>
<dbReference type="PDB" id="4DEY">
    <property type="method" value="X-ray"/>
    <property type="resolution" value="1.95 A"/>
    <property type="chains" value="B=435-539"/>
</dbReference>
<dbReference type="PDB" id="6CTB">
    <property type="method" value="NMR"/>
    <property type="chains" value="B=1644-1668"/>
</dbReference>
<dbReference type="PDBsum" id="4DEY"/>
<dbReference type="PDBsum" id="6CTB"/>
<dbReference type="BMRB" id="P15381"/>
<dbReference type="SMR" id="P15381"/>
<dbReference type="DIP" id="DIP-61286N"/>
<dbReference type="FunCoup" id="P15381">
    <property type="interactions" value="140"/>
</dbReference>
<dbReference type="IntAct" id="P15381">
    <property type="interactions" value="3"/>
</dbReference>
<dbReference type="STRING" id="9986.ENSOCUP00000038400"/>
<dbReference type="BindingDB" id="P15381"/>
<dbReference type="ChEMBL" id="CHEMBL2830"/>
<dbReference type="DrugCentral" id="P15381"/>
<dbReference type="GlyCosmos" id="P15381">
    <property type="glycosylation" value="4 sites, No reported glycans"/>
</dbReference>
<dbReference type="iPTMnet" id="P15381"/>
<dbReference type="PaxDb" id="9986-ENSOCUP00000009984"/>
<dbReference type="ABCD" id="P15381">
    <property type="antibodies" value="2 sequenced antibodies"/>
</dbReference>
<dbReference type="GeneID" id="100101555"/>
<dbReference type="KEGG" id="ocu:100101555"/>
<dbReference type="CTD" id="775"/>
<dbReference type="eggNOG" id="KOG2301">
    <property type="taxonomic scope" value="Eukaryota"/>
</dbReference>
<dbReference type="InParanoid" id="P15381"/>
<dbReference type="OrthoDB" id="431720at2759"/>
<dbReference type="EvolutionaryTrace" id="P15381"/>
<dbReference type="Proteomes" id="UP000001811">
    <property type="component" value="Unplaced"/>
</dbReference>
<dbReference type="GO" id="GO:0030425">
    <property type="term" value="C:dendrite"/>
    <property type="evidence" value="ECO:0007669"/>
    <property type="project" value="UniProtKB-SubCell"/>
</dbReference>
<dbReference type="GO" id="GO:1990454">
    <property type="term" value="C:L-type voltage-gated calcium channel complex"/>
    <property type="evidence" value="ECO:0000314"/>
    <property type="project" value="UniProtKB"/>
</dbReference>
<dbReference type="GO" id="GO:0016020">
    <property type="term" value="C:membrane"/>
    <property type="evidence" value="ECO:0000250"/>
    <property type="project" value="UniProtKB"/>
</dbReference>
<dbReference type="GO" id="GO:0043204">
    <property type="term" value="C:perikaryon"/>
    <property type="evidence" value="ECO:0007669"/>
    <property type="project" value="UniProtKB-SubCell"/>
</dbReference>
<dbReference type="GO" id="GO:0005886">
    <property type="term" value="C:plasma membrane"/>
    <property type="evidence" value="ECO:0000314"/>
    <property type="project" value="UniProtKB"/>
</dbReference>
<dbReference type="GO" id="GO:0014069">
    <property type="term" value="C:postsynaptic density"/>
    <property type="evidence" value="ECO:0000250"/>
    <property type="project" value="UniProtKB"/>
</dbReference>
<dbReference type="GO" id="GO:0098839">
    <property type="term" value="C:postsynaptic density membrane"/>
    <property type="evidence" value="ECO:0007669"/>
    <property type="project" value="UniProtKB-SubCell"/>
</dbReference>
<dbReference type="GO" id="GO:0042383">
    <property type="term" value="C:sarcolemma"/>
    <property type="evidence" value="ECO:0000314"/>
    <property type="project" value="UniProtKB"/>
</dbReference>
<dbReference type="GO" id="GO:0030315">
    <property type="term" value="C:T-tubule"/>
    <property type="evidence" value="ECO:0000314"/>
    <property type="project" value="UniProtKB"/>
</dbReference>
<dbReference type="GO" id="GO:0005891">
    <property type="term" value="C:voltage-gated calcium channel complex"/>
    <property type="evidence" value="ECO:0000250"/>
    <property type="project" value="UniProtKB"/>
</dbReference>
<dbReference type="GO" id="GO:0005516">
    <property type="term" value="F:calmodulin binding"/>
    <property type="evidence" value="ECO:0007669"/>
    <property type="project" value="UniProtKB-KW"/>
</dbReference>
<dbReference type="GO" id="GO:0008331">
    <property type="term" value="F:high voltage-gated calcium channel activity"/>
    <property type="evidence" value="ECO:0000314"/>
    <property type="project" value="UniProtKB"/>
</dbReference>
<dbReference type="GO" id="GO:0046872">
    <property type="term" value="F:metal ion binding"/>
    <property type="evidence" value="ECO:0007669"/>
    <property type="project" value="UniProtKB-KW"/>
</dbReference>
<dbReference type="GO" id="GO:0005245">
    <property type="term" value="F:voltage-gated calcium channel activity"/>
    <property type="evidence" value="ECO:0000314"/>
    <property type="project" value="UniProtKB"/>
</dbReference>
<dbReference type="GO" id="GO:0098703">
    <property type="term" value="P:calcium ion import across plasma membrane"/>
    <property type="evidence" value="ECO:0007669"/>
    <property type="project" value="TreeGrafter"/>
</dbReference>
<dbReference type="GO" id="GO:0070588">
    <property type="term" value="P:calcium ion transmembrane transport"/>
    <property type="evidence" value="ECO:0000314"/>
    <property type="project" value="BHF-UCL"/>
</dbReference>
<dbReference type="GO" id="GO:0061577">
    <property type="term" value="P:calcium ion transmembrane transport via high voltage-gated calcium channel"/>
    <property type="evidence" value="ECO:0000314"/>
    <property type="project" value="BHF-UCL"/>
</dbReference>
<dbReference type="GO" id="GO:0060402">
    <property type="term" value="P:calcium ion transport into cytosol"/>
    <property type="evidence" value="ECO:0000314"/>
    <property type="project" value="UniProtKB"/>
</dbReference>
<dbReference type="GO" id="GO:0061337">
    <property type="term" value="P:cardiac conduction"/>
    <property type="evidence" value="ECO:0000250"/>
    <property type="project" value="UniProtKB"/>
</dbReference>
<dbReference type="GO" id="GO:0045762">
    <property type="term" value="P:positive regulation of adenylate cyclase activity"/>
    <property type="evidence" value="ECO:0000250"/>
    <property type="project" value="UniProtKB"/>
</dbReference>
<dbReference type="GO" id="GO:0007204">
    <property type="term" value="P:positive regulation of cytosolic calcium ion concentration"/>
    <property type="evidence" value="ECO:0000250"/>
    <property type="project" value="UniProtKB"/>
</dbReference>
<dbReference type="GO" id="GO:0010881">
    <property type="term" value="P:regulation of cardiac muscle contraction by regulation of the release of sequestered calcium ion"/>
    <property type="evidence" value="ECO:0000315"/>
    <property type="project" value="UniProtKB"/>
</dbReference>
<dbReference type="GO" id="GO:0098903">
    <property type="term" value="P:regulation of membrane repolarization during action potential"/>
    <property type="evidence" value="ECO:0000314"/>
    <property type="project" value="BHF-UCL"/>
</dbReference>
<dbReference type="FunFam" id="1.10.287.70:FF:000007">
    <property type="entry name" value="Voltage-dependent L-type calcium channel subunit alpha"/>
    <property type="match status" value="1"/>
</dbReference>
<dbReference type="FunFam" id="1.10.287.70:FF:000009">
    <property type="entry name" value="Voltage-dependent L-type calcium channel subunit alpha"/>
    <property type="match status" value="1"/>
</dbReference>
<dbReference type="FunFam" id="1.10.287.70:FF:000021">
    <property type="entry name" value="Voltage-dependent L-type calcium channel subunit alpha"/>
    <property type="match status" value="1"/>
</dbReference>
<dbReference type="FunFam" id="1.20.120.350:FF:000001">
    <property type="entry name" value="Voltage-dependent L-type calcium channel subunit alpha"/>
    <property type="match status" value="1"/>
</dbReference>
<dbReference type="FunFam" id="1.20.120.350:FF:000006">
    <property type="entry name" value="Voltage-dependent L-type calcium channel subunit alpha"/>
    <property type="match status" value="1"/>
</dbReference>
<dbReference type="FunFam" id="1.20.120.350:FF:000010">
    <property type="entry name" value="Voltage-dependent L-type calcium channel subunit alpha"/>
    <property type="match status" value="1"/>
</dbReference>
<dbReference type="FunFam" id="1.20.120.350:FF:000020">
    <property type="entry name" value="Voltage-dependent L-type calcium channel subunit alpha"/>
    <property type="match status" value="1"/>
</dbReference>
<dbReference type="FunFam" id="1.10.238.10:FF:000063">
    <property type="entry name" value="Voltage-dependent N-type calcium channel subunit alpha"/>
    <property type="match status" value="1"/>
</dbReference>
<dbReference type="Gene3D" id="1.10.287.70">
    <property type="match status" value="4"/>
</dbReference>
<dbReference type="Gene3D" id="6.10.250.2180">
    <property type="match status" value="1"/>
</dbReference>
<dbReference type="Gene3D" id="6.10.250.2500">
    <property type="match status" value="1"/>
</dbReference>
<dbReference type="Gene3D" id="1.20.120.350">
    <property type="entry name" value="Voltage-gated potassium channels. Chain C"/>
    <property type="match status" value="4"/>
</dbReference>
<dbReference type="InterPro" id="IPR031688">
    <property type="entry name" value="CAC1F_C"/>
</dbReference>
<dbReference type="InterPro" id="IPR031649">
    <property type="entry name" value="GPHH_dom"/>
</dbReference>
<dbReference type="InterPro" id="IPR005821">
    <property type="entry name" value="Ion_trans_dom"/>
</dbReference>
<dbReference type="InterPro" id="IPR014873">
    <property type="entry name" value="VDCC_a1su_IQ"/>
</dbReference>
<dbReference type="InterPro" id="IPR050599">
    <property type="entry name" value="VDCC_alpha-1_subunit"/>
</dbReference>
<dbReference type="InterPro" id="IPR005451">
    <property type="entry name" value="VDCC_L_a1csu"/>
</dbReference>
<dbReference type="InterPro" id="IPR005446">
    <property type="entry name" value="VDCC_L_a1su"/>
</dbReference>
<dbReference type="InterPro" id="IPR002077">
    <property type="entry name" value="VDCCAlpha1"/>
</dbReference>
<dbReference type="InterPro" id="IPR027359">
    <property type="entry name" value="Volt_channel_dom_sf"/>
</dbReference>
<dbReference type="PANTHER" id="PTHR45628">
    <property type="entry name" value="VOLTAGE-DEPENDENT CALCIUM CHANNEL TYPE A SUBUNIT ALPHA-1"/>
    <property type="match status" value="1"/>
</dbReference>
<dbReference type="PANTHER" id="PTHR45628:SF10">
    <property type="entry name" value="VOLTAGE-DEPENDENT L-TYPE CALCIUM CHANNEL SUBUNIT ALPHA-1C"/>
    <property type="match status" value="1"/>
</dbReference>
<dbReference type="Pfam" id="PF08763">
    <property type="entry name" value="Ca_chan_IQ"/>
    <property type="match status" value="1"/>
</dbReference>
<dbReference type="Pfam" id="PF16885">
    <property type="entry name" value="CAC1F_C"/>
    <property type="match status" value="1"/>
</dbReference>
<dbReference type="Pfam" id="PF16905">
    <property type="entry name" value="GPHH"/>
    <property type="match status" value="1"/>
</dbReference>
<dbReference type="Pfam" id="PF00520">
    <property type="entry name" value="Ion_trans"/>
    <property type="match status" value="4"/>
</dbReference>
<dbReference type="PRINTS" id="PR00167">
    <property type="entry name" value="CACHANNEL"/>
</dbReference>
<dbReference type="PRINTS" id="PR01630">
    <property type="entry name" value="LVDCCALPHA1"/>
</dbReference>
<dbReference type="PRINTS" id="PR01635">
    <property type="entry name" value="LVDCCALPHA1C"/>
</dbReference>
<dbReference type="SMART" id="SM01062">
    <property type="entry name" value="Ca_chan_IQ"/>
    <property type="match status" value="1"/>
</dbReference>
<dbReference type="SUPFAM" id="SSF81324">
    <property type="entry name" value="Voltage-gated potassium channels"/>
    <property type="match status" value="4"/>
</dbReference>
<evidence type="ECO:0000250" key="1">
    <source>
        <dbReference type="UniProtKB" id="P07293"/>
    </source>
</evidence>
<evidence type="ECO:0000250" key="2">
    <source>
        <dbReference type="UniProtKB" id="P22002"/>
    </source>
</evidence>
<evidence type="ECO:0000250" key="3">
    <source>
        <dbReference type="UniProtKB" id="Q01815"/>
    </source>
</evidence>
<evidence type="ECO:0000250" key="4">
    <source>
        <dbReference type="UniProtKB" id="Q13936"/>
    </source>
</evidence>
<evidence type="ECO:0000255" key="5"/>
<evidence type="ECO:0000256" key="6">
    <source>
        <dbReference type="SAM" id="MobiDB-lite"/>
    </source>
</evidence>
<evidence type="ECO:0000269" key="7">
    <source>
    </source>
</evidence>
<evidence type="ECO:0000269" key="8">
    <source>
    </source>
</evidence>
<evidence type="ECO:0000269" key="9">
    <source>
    </source>
</evidence>
<evidence type="ECO:0000269" key="10">
    <source>
    </source>
</evidence>
<evidence type="ECO:0000269" key="11">
    <source>
    </source>
</evidence>
<evidence type="ECO:0000269" key="12">
    <source>
    </source>
</evidence>
<evidence type="ECO:0000269" key="13">
    <source>
    </source>
</evidence>
<evidence type="ECO:0000269" key="14">
    <source>
    </source>
</evidence>
<evidence type="ECO:0000269" key="15">
    <source>
    </source>
</evidence>
<evidence type="ECO:0000269" key="16">
    <source>
    </source>
</evidence>
<evidence type="ECO:0000269" key="17">
    <source>
    </source>
</evidence>
<evidence type="ECO:0000269" key="18">
    <source>
    </source>
</evidence>
<evidence type="ECO:0000269" key="19">
    <source>
    </source>
</evidence>
<evidence type="ECO:0000269" key="20">
    <source>
    </source>
</evidence>
<evidence type="ECO:0000269" key="21">
    <source>
    </source>
</evidence>
<evidence type="ECO:0000269" key="22">
    <source>
    </source>
</evidence>
<evidence type="ECO:0000269" key="23">
    <source>
    </source>
</evidence>
<evidence type="ECO:0000303" key="24">
    <source>
    </source>
</evidence>
<evidence type="ECO:0000303" key="25">
    <source>
    </source>
</evidence>
<evidence type="ECO:0000305" key="26"/>
<evidence type="ECO:0007744" key="27">
    <source>
        <dbReference type="PDB" id="4DEY"/>
    </source>
</evidence>
<evidence type="ECO:0007829" key="28">
    <source>
        <dbReference type="PDB" id="4DEY"/>
    </source>
</evidence>
<evidence type="ECO:0007829" key="29">
    <source>
        <dbReference type="PDB" id="6CTB"/>
    </source>
</evidence>
<feature type="chain" id="PRO_0000053930" description="Voltage-dependent L-type calcium channel subunit alpha-1C">
    <location>
        <begin position="1"/>
        <end position="2171"/>
    </location>
</feature>
<feature type="topological domain" description="Cytoplasmic" evidence="26">
    <location>
        <begin position="1"/>
        <end position="154"/>
    </location>
</feature>
<feature type="transmembrane region" description="Helical; Name=S1 of repeat I" evidence="1">
    <location>
        <begin position="155"/>
        <end position="173"/>
    </location>
</feature>
<feature type="topological domain" description="Extracellular" evidence="26">
    <location>
        <begin position="174"/>
        <end position="188"/>
    </location>
</feature>
<feature type="transmembrane region" description="Helical; Name=S2 of repeat I" evidence="1">
    <location>
        <begin position="189"/>
        <end position="209"/>
    </location>
</feature>
<feature type="topological domain" description="Cytoplasmic" evidence="26">
    <location>
        <begin position="210"/>
        <end position="218"/>
    </location>
</feature>
<feature type="transmembrane region" description="Helical; Name=S3 of repeat I" evidence="1">
    <location>
        <begin position="219"/>
        <end position="239"/>
    </location>
</feature>
<feature type="topological domain" description="Extracellular" evidence="26">
    <location>
        <begin position="240"/>
        <end position="262"/>
    </location>
</feature>
<feature type="transmembrane region" description="Helical; Name=S4 of repeat I" evidence="1">
    <location>
        <begin position="263"/>
        <end position="281"/>
    </location>
</feature>
<feature type="topological domain" description="Cytoplasmic" evidence="26">
    <location>
        <begin position="282"/>
        <end position="298"/>
    </location>
</feature>
<feature type="transmembrane region" description="Helical; Name=S5 of repeat I" evidence="1">
    <location>
        <begin position="299"/>
        <end position="320"/>
    </location>
</feature>
<feature type="topological domain" description="Extracellular" evidence="26">
    <location>
        <begin position="321"/>
        <end position="380"/>
    </location>
</feature>
<feature type="intramembrane region" description="Pore-forming" evidence="1">
    <location>
        <begin position="381"/>
        <end position="402"/>
    </location>
</feature>
<feature type="topological domain" description="Extracellular" evidence="26">
    <location>
        <begin position="403"/>
        <end position="410"/>
    </location>
</feature>
<feature type="transmembrane region" description="Helical; Name=S6 of repeat I" evidence="1">
    <location>
        <begin position="411"/>
        <end position="431"/>
    </location>
</feature>
<feature type="topological domain" description="Cytoplasmic" evidence="26">
    <location>
        <begin position="432"/>
        <end position="554"/>
    </location>
</feature>
<feature type="transmembrane region" description="Helical; Name=S1 of repeat II" evidence="1">
    <location>
        <begin position="555"/>
        <end position="573"/>
    </location>
</feature>
<feature type="topological domain" description="Extracellular" evidence="26">
    <location>
        <begin position="574"/>
        <end position="584"/>
    </location>
</feature>
<feature type="transmembrane region" description="Helical; Name=S2 of repeat II" evidence="1">
    <location>
        <begin position="585"/>
        <end position="605"/>
    </location>
</feature>
<feature type="topological domain" description="Cytoplasmic" evidence="26">
    <location>
        <begin position="606"/>
        <end position="616"/>
    </location>
</feature>
<feature type="transmembrane region" description="Helical; Name=S3 of repeat II" evidence="1">
    <location>
        <begin position="617"/>
        <end position="636"/>
    </location>
</feature>
<feature type="topological domain" description="Extracellular" evidence="26">
    <location>
        <begin position="637"/>
        <end position="645"/>
    </location>
</feature>
<feature type="transmembrane region" description="Helical; Name=S4 of repeat II" evidence="1">
    <location>
        <begin position="646"/>
        <end position="664"/>
    </location>
</feature>
<feature type="topological domain" description="Cytoplasmic" evidence="26">
    <location>
        <begin position="665"/>
        <end position="683"/>
    </location>
</feature>
<feature type="transmembrane region" description="Helical; Name=S5 of repeat II" evidence="1">
    <location>
        <begin position="684"/>
        <end position="703"/>
    </location>
</feature>
<feature type="topological domain" description="Extracellular" evidence="26">
    <location>
        <begin position="704"/>
        <end position="723"/>
    </location>
</feature>
<feature type="intramembrane region" description="Pore-forming" evidence="1">
    <location>
        <begin position="724"/>
        <end position="745"/>
    </location>
</feature>
<feature type="topological domain" description="Extracellular" evidence="26">
    <location>
        <begin position="746"/>
        <end position="755"/>
    </location>
</feature>
<feature type="transmembrane region" description="Helical; Name=S6 of repeat II" evidence="1">
    <location>
        <begin position="756"/>
        <end position="775"/>
    </location>
</feature>
<feature type="topological domain" description="Cytoplasmic" evidence="26">
    <location>
        <begin position="776"/>
        <end position="930"/>
    </location>
</feature>
<feature type="transmembrane region" description="Helical; Name=S1 of repeat III" evidence="1">
    <location>
        <begin position="931"/>
        <end position="949"/>
    </location>
</feature>
<feature type="topological domain" description="Extracellular" evidence="26">
    <location>
        <begin position="950"/>
        <end position="961"/>
    </location>
</feature>
<feature type="transmembrane region" description="Helical; Name=S2 of repeat III" evidence="1">
    <location>
        <begin position="962"/>
        <end position="981"/>
    </location>
</feature>
<feature type="topological domain" description="Cytoplasmic" evidence="26">
    <location>
        <begin position="982"/>
        <end position="997"/>
    </location>
</feature>
<feature type="transmembrane region" description="Helical; Name=S3 of repeat III" evidence="1">
    <location>
        <begin position="998"/>
        <end position="1016"/>
    </location>
</feature>
<feature type="topological domain" description="Extracellular" evidence="26">
    <location>
        <begin position="1017"/>
        <end position="1023"/>
    </location>
</feature>
<feature type="transmembrane region" description="Helical; Name=S4 of repeat III" evidence="1">
    <location>
        <begin position="1024"/>
        <end position="1042"/>
    </location>
</feature>
<feature type="topological domain" description="Cytoplasmic" evidence="26">
    <location>
        <begin position="1043"/>
        <end position="1061"/>
    </location>
</feature>
<feature type="transmembrane region" description="Helical; Name=S5 of repeat III" evidence="1">
    <location>
        <begin position="1062"/>
        <end position="1081"/>
    </location>
</feature>
<feature type="topological domain" description="Extracellular" evidence="26">
    <location>
        <begin position="1082"/>
        <end position="1131"/>
    </location>
</feature>
<feature type="intramembrane region" description="Pore-forming" evidence="1">
    <location>
        <begin position="1132"/>
        <end position="1152"/>
    </location>
</feature>
<feature type="topological domain" description="Extracellular" evidence="26">
    <location>
        <begin position="1153"/>
        <end position="1169"/>
    </location>
</feature>
<feature type="transmembrane region" description="Helical; Name=S6 of repeat III" evidence="1">
    <location>
        <begin position="1170"/>
        <end position="1191"/>
    </location>
</feature>
<feature type="topological domain" description="Cytoplasmic" evidence="26">
    <location>
        <begin position="1192"/>
        <end position="1249"/>
    </location>
</feature>
<feature type="transmembrane region" description="Helical; Name=S1 of repeat IV" evidence="1">
    <location>
        <begin position="1250"/>
        <end position="1271"/>
    </location>
</feature>
<feature type="topological domain" description="Extracellular" evidence="26">
    <location>
        <begin position="1272"/>
        <end position="1279"/>
    </location>
</feature>
<feature type="transmembrane region" description="Helical; Name=S2 of repeat IV" evidence="1">
    <location>
        <begin position="1280"/>
        <end position="1301"/>
    </location>
</feature>
<feature type="topological domain" description="Cytoplasmic" evidence="26">
    <location>
        <begin position="1302"/>
        <end position="1311"/>
    </location>
</feature>
<feature type="transmembrane region" description="Helical; Name=S3 of repeat IV" evidence="1">
    <location>
        <begin position="1312"/>
        <end position="1331"/>
    </location>
</feature>
<feature type="topological domain" description="Extracellular" evidence="26">
    <location>
        <begin position="1332"/>
        <end position="1354"/>
    </location>
</feature>
<feature type="transmembrane region" description="Helical; Name=S4 of repeat IV" evidence="1">
    <location>
        <begin position="1355"/>
        <end position="1373"/>
    </location>
</feature>
<feature type="topological domain" description="Cytoplasmic" evidence="26">
    <location>
        <begin position="1374"/>
        <end position="1391"/>
    </location>
</feature>
<feature type="transmembrane region" description="Helical; Name=S5 of repeat IV" evidence="1">
    <location>
        <begin position="1392"/>
        <end position="1412"/>
    </location>
</feature>
<feature type="topological domain" description="Extracellular" evidence="26">
    <location>
        <begin position="1413"/>
        <end position="1434"/>
    </location>
</feature>
<feature type="intramembrane region" description="Pore-forming" evidence="1">
    <location>
        <begin position="1435"/>
        <end position="1453"/>
    </location>
</feature>
<feature type="topological domain" description="Extracellular" evidence="26">
    <location>
        <begin position="1454"/>
        <end position="1481"/>
    </location>
</feature>
<feature type="transmembrane region" description="Helical; Name=S6 of repeat IV" evidence="1">
    <location>
        <begin position="1482"/>
        <end position="1506"/>
    </location>
</feature>
<feature type="topological domain" description="Cytoplasmic" evidence="26">
    <location>
        <begin position="1507"/>
        <end position="2171"/>
    </location>
</feature>
<feature type="repeat" description="I">
    <location>
        <begin position="141"/>
        <end position="438"/>
    </location>
</feature>
<feature type="repeat" description="II">
    <location>
        <begin position="540"/>
        <end position="786"/>
    </location>
</feature>
<feature type="repeat" description="III">
    <location>
        <begin position="917"/>
        <end position="1199"/>
    </location>
</feature>
<feature type="repeat" description="IV">
    <location>
        <begin position="1236"/>
        <end position="1509"/>
    </location>
</feature>
<feature type="region of interest" description="Calmodulin-binding" evidence="4">
    <location>
        <begin position="77"/>
        <end position="98"/>
    </location>
</feature>
<feature type="region of interest" description="Disordered" evidence="6">
    <location>
        <begin position="103"/>
        <end position="128"/>
    </location>
</feature>
<feature type="region of interest" description="AID/alpha-interaction domain; mediates interaction with the beta subunit" evidence="2">
    <location>
        <begin position="458"/>
        <end position="475"/>
    </location>
</feature>
<feature type="region of interest" description="Disordered" evidence="6">
    <location>
        <begin position="479"/>
        <end position="511"/>
    </location>
</feature>
<feature type="region of interest" description="Disordered" evidence="6">
    <location>
        <begin position="794"/>
        <end position="891"/>
    </location>
</feature>
<feature type="region of interest" description="Interaction with STAC2" evidence="4">
    <location>
        <begin position="859"/>
        <end position="906"/>
    </location>
</feature>
<feature type="region of interest" description="Dihydropyridine binding" evidence="1">
    <location>
        <begin position="1119"/>
        <end position="1208"/>
    </location>
</feature>
<feature type="region of interest" description="Dihydropyridine binding" evidence="1">
    <location>
        <begin position="1460"/>
        <end position="1528"/>
    </location>
</feature>
<feature type="region of interest" description="Phenylalkylamine binding" evidence="1">
    <location>
        <begin position="1474"/>
        <end position="1516"/>
    </location>
</feature>
<feature type="region of interest" description="Important for interaction with STAC1, STAC2 and STAC3" evidence="17">
    <location>
        <begin position="1641"/>
        <end position="1668"/>
    </location>
</feature>
<feature type="region of interest" description="Calmodulin-binding IQ region" evidence="4">
    <location>
        <begin position="1647"/>
        <end position="1667"/>
    </location>
</feature>
<feature type="region of interest" description="Important for localization in at the junctional membrane" evidence="13">
    <location>
        <begin position="1681"/>
        <end position="1700"/>
    </location>
</feature>
<feature type="region of interest" description="Disordered" evidence="6">
    <location>
        <begin position="1760"/>
        <end position="1797"/>
    </location>
</feature>
<feature type="region of interest" description="Disordered" evidence="6">
    <location>
        <begin position="1971"/>
        <end position="2014"/>
    </location>
</feature>
<feature type="region of interest" description="Disordered" evidence="6">
    <location>
        <begin position="2026"/>
        <end position="2060"/>
    </location>
</feature>
<feature type="region of interest" description="Disordered" evidence="6">
    <location>
        <begin position="2114"/>
        <end position="2155"/>
    </location>
</feature>
<feature type="short sequence motif" description="Selectivity filter of repeat I" evidence="1">
    <location>
        <begin position="391"/>
        <end position="394"/>
    </location>
</feature>
<feature type="short sequence motif" description="Selectivity filter of repeat II" evidence="1">
    <location>
        <begin position="734"/>
        <end position="737"/>
    </location>
</feature>
<feature type="short sequence motif" description="Selectivity filter of repeat III" evidence="1">
    <location>
        <begin position="1143"/>
        <end position="1146"/>
    </location>
</feature>
<feature type="short sequence motif" description="Selectivity filter of repeat IV" evidence="1">
    <location>
        <begin position="1444"/>
        <end position="1447"/>
    </location>
</feature>
<feature type="compositionally biased region" description="Basic residues" evidence="6">
    <location>
        <begin position="110"/>
        <end position="121"/>
    </location>
</feature>
<feature type="compositionally biased region" description="Polar residues" evidence="6">
    <location>
        <begin position="495"/>
        <end position="508"/>
    </location>
</feature>
<feature type="compositionally biased region" description="Basic and acidic residues" evidence="6">
    <location>
        <begin position="813"/>
        <end position="836"/>
    </location>
</feature>
<feature type="compositionally biased region" description="Acidic residues" evidence="6">
    <location>
        <begin position="873"/>
        <end position="882"/>
    </location>
</feature>
<feature type="compositionally biased region" description="Polar residues" evidence="6">
    <location>
        <begin position="1781"/>
        <end position="1793"/>
    </location>
</feature>
<feature type="compositionally biased region" description="Basic and acidic residues" evidence="6">
    <location>
        <begin position="2130"/>
        <end position="2140"/>
    </location>
</feature>
<feature type="binding site" evidence="1">
    <location>
        <position position="393"/>
    </location>
    <ligand>
        <name>Ca(2+)</name>
        <dbReference type="ChEBI" id="CHEBI:29108"/>
    </ligand>
</feature>
<feature type="binding site" evidence="1">
    <location>
        <position position="736"/>
    </location>
    <ligand>
        <name>Ca(2+)</name>
        <dbReference type="ChEBI" id="CHEBI:29108"/>
    </ligand>
</feature>
<feature type="binding site" evidence="1">
    <location>
        <position position="1145"/>
    </location>
    <ligand>
        <name>Ca(2+)</name>
        <dbReference type="ChEBI" id="CHEBI:29108"/>
    </ligand>
</feature>
<feature type="site" description="Calcium ion selectivity and permeability" evidence="20">
    <location>
        <position position="393"/>
    </location>
</feature>
<feature type="site" description="Calcium ion selectivity and permeability" evidence="20">
    <location>
        <position position="736"/>
    </location>
</feature>
<feature type="site" description="Calcium ion selectivity and permeability" evidence="20">
    <location>
        <position position="1145"/>
    </location>
</feature>
<feature type="site" description="Calcium ion selectivity and permeability" evidence="20">
    <location>
        <position position="1446"/>
    </location>
</feature>
<feature type="modified residue" description="Phosphoserine" evidence="3">
    <location>
        <position position="499"/>
    </location>
</feature>
<feature type="modified residue" description="Phosphothreonine" evidence="3">
    <location>
        <position position="506"/>
    </location>
</feature>
<feature type="modified residue" description="Phosphoserine" evidence="3">
    <location>
        <position position="838"/>
    </location>
</feature>
<feature type="modified residue" description="Phosphoserine" evidence="3">
    <location>
        <position position="845"/>
    </location>
</feature>
<feature type="modified residue" description="Phosphoserine" evidence="3">
    <location>
        <position position="1700"/>
    </location>
</feature>
<feature type="modified residue" description="Phosphoserine" evidence="3">
    <location>
        <position position="1721"/>
    </location>
</feature>
<feature type="modified residue" description="Phosphoserine; by PKA" evidence="21">
    <location>
        <position position="1928"/>
    </location>
</feature>
<feature type="glycosylation site" description="N-linked (GlcNAc...) asparagine" evidence="5">
    <location>
        <position position="183"/>
    </location>
</feature>
<feature type="glycosylation site" description="N-linked (GlcNAc...) asparagine" evidence="5">
    <location>
        <position position="358"/>
    </location>
</feature>
<feature type="glycosylation site" description="N-linked (GlcNAc...) asparagine" evidence="5">
    <location>
        <position position="1418"/>
    </location>
</feature>
<feature type="glycosylation site" description="N-linked (GlcNAc...) asparagine" evidence="5">
    <location>
        <position position="1469"/>
    </location>
</feature>
<feature type="disulfide bond" evidence="1">
    <location>
        <begin position="328"/>
        <end position="356"/>
    </location>
</feature>
<feature type="disulfide bond" evidence="1">
    <location>
        <begin position="346"/>
        <end position="362"/>
    </location>
</feature>
<feature type="disulfide bond" evidence="1">
    <location>
        <begin position="1088"/>
        <end position="1099"/>
    </location>
</feature>
<feature type="disulfide bond" evidence="1">
    <location>
        <begin position="1461"/>
        <end position="1477"/>
    </location>
</feature>
<feature type="splice variant" id="VSP_000902" description="In isoform 4 and isoform 5." evidence="24">
    <original>MLRALVQPATPAYQPLPSHLSAETESTCKGTVVHEAQLNHFYISPG</original>
    <variation>MVNENTRMYIPEENHQ</variation>
    <location>
        <begin position="1"/>
        <end position="46"/>
    </location>
</feature>
<feature type="splice variant" id="VSP_000903" description="In isoform 5." evidence="24">
    <location>
        <begin position="66"/>
        <end position="79"/>
    </location>
</feature>
<feature type="splice variant" id="VSP_000904" description="In isoform 4." evidence="26">
    <original>MQDAMGYELPWVYFVSLVIF</original>
    <variation>VNDAVGRDWPWIYFVTLIII</variation>
    <location>
        <begin position="402"/>
        <end position="421"/>
    </location>
</feature>
<feature type="splice variant" id="VSP_000905" description="In isoform 4." evidence="26">
    <original>M</original>
    <variation>RGTPAGLHAQKKGKFAWFSHSTETHV</variation>
    <location>
        <position position="494"/>
    </location>
</feature>
<feature type="splice variant" id="VSP_000906" description="In isoform 2 and isoform 4." evidence="25">
    <original>GYFSDPWNVFDFLIVIGSIIDVILSETN</original>
    <variation>HYFCDAWNTFDALIVVGSIVDIAITEVH</variation>
    <location>
        <begin position="1307"/>
        <end position="1334"/>
    </location>
</feature>
<feature type="splice variant" id="VSP_000907" description="In isoform 3." evidence="26">
    <location>
        <begin position="1335"/>
        <end position="1345"/>
    </location>
</feature>
<feature type="mutagenesis site" description="Small reduction of current amplitude." evidence="23">
    <original>C</original>
    <variation>G</variation>
    <location>
        <position position="168"/>
    </location>
</feature>
<feature type="mutagenesis site" description="No current." evidence="23">
    <original>C</original>
    <variation>K</variation>
    <variation>W</variation>
    <location>
        <position position="168"/>
    </location>
</feature>
<feature type="mutagenesis site" description="No effect." evidence="23">
    <original>C</original>
    <variation>S</variation>
    <location>
        <position position="168"/>
    </location>
</feature>
<feature type="mutagenesis site" description="Slower channel activation and reduction of current amplitude." evidence="23">
    <original>C</original>
    <variation>Y</variation>
    <location>
        <position position="168"/>
    </location>
</feature>
<feature type="mutagenesis site" description="Loss of channel activity and ability to trigger cardiomyocyte contraction; when associated with A-736; A-1145 and A-1446." evidence="14">
    <original>E</original>
    <variation>A</variation>
    <location>
        <position position="393"/>
    </location>
</feature>
<feature type="mutagenesis site" description="Drastic reduction of barium permeability. Reduction of calcium block of lithium currents." evidence="20">
    <original>E</original>
    <variation>K</variation>
    <location>
        <position position="393"/>
    </location>
</feature>
<feature type="mutagenesis site" description="Attenuates calcium block of inward barium, lithium, or cadmium currents." evidence="20">
    <original>E</original>
    <variation>Q</variation>
    <location>
        <position position="393"/>
    </location>
</feature>
<feature type="mutagenesis site" description="Decreased rate of channel inactivation." evidence="12">
    <original>G</original>
    <variation>R</variation>
    <location>
        <position position="449"/>
    </location>
</feature>
<feature type="mutagenesis site" description="Loss of channel activity and ability to trigger cardiomyocyte contraction; when associated with A-393; A-1145 and A-1446." evidence="14">
    <original>E</original>
    <variation>A</variation>
    <location>
        <position position="736"/>
    </location>
</feature>
<feature type="mutagenesis site" description="Drastic reduction of barium permeability. Reduction of calcium block of lithium currents." evidence="20">
    <original>E</original>
    <variation>K</variation>
    <location>
        <position position="736"/>
    </location>
</feature>
<feature type="mutagenesis site" description="Attenuates calcium block of inward barium, lithium, or cadmium currents." evidence="20">
    <original>E</original>
    <variation>Q</variation>
    <location>
        <position position="736"/>
    </location>
</feature>
<feature type="mutagenesis site" description="Loss of nifedipine-sensitivity and channel activity; when associated with Y-1066." evidence="14">
    <original>L</original>
    <variation>P</variation>
    <location>
        <position position="775"/>
    </location>
</feature>
<feature type="mutagenesis site" description="Loss of nifedipine-sensitivity and channel activity; when associated with P-775." evidence="14">
    <original>T</original>
    <variation>Y</variation>
    <location>
        <position position="1066"/>
    </location>
</feature>
<feature type="mutagenesis site" description="Loss of channel activity and ability to trigger cardiomyocyte contraction; when associated with A-393; A-736 and A-1446." evidence="14">
    <original>E</original>
    <variation>A</variation>
    <location>
        <position position="1145"/>
    </location>
</feature>
<feature type="mutagenesis site" description="Drastic reduction of barium permeability. Reduction of calcium block of lithium currents." evidence="20">
    <original>E</original>
    <variation>K</variation>
    <location>
        <position position="1145"/>
    </location>
</feature>
<feature type="mutagenesis site" description="Attenuates calcium block of inward barium, lithium, or cadmium currents." evidence="20">
    <original>E</original>
    <variation>Q</variation>
    <location>
        <position position="1145"/>
    </location>
</feature>
<feature type="mutagenesis site" description="Loss of channel activity and ability to trigger cardiomyocyte contraction; when associated with A-393; A-736 and A-1145." evidence="14">
    <original>E</original>
    <variation>A</variation>
    <location>
        <position position="1446"/>
    </location>
</feature>
<feature type="mutagenesis site" description="Moderate reduction of barium permeability. Reduction of calcium block of lithium currents." evidence="20">
    <original>E</original>
    <variation>K</variation>
    <location>
        <position position="1446"/>
    </location>
</feature>
<feature type="mutagenesis site" description="Attenuates calcium block of inward barium, lithium, or cadmium currents." evidence="20">
    <original>E</original>
    <variation>Q</variation>
    <location>
        <position position="1446"/>
    </location>
</feature>
<feature type="mutagenesis site" description="Mildly decreased interaction with STAC3." evidence="17">
    <original>F</original>
    <variation>A</variation>
    <location>
        <position position="1648"/>
    </location>
</feature>
<feature type="mutagenesis site" description="Strongly decreased interaction with STAC3." evidence="17">
    <original>I</original>
    <variation>A</variation>
    <location>
        <position position="1654"/>
    </location>
</feature>
<feature type="mutagenesis site" description="Decreased interaction with STAC3." evidence="17">
    <original>F</original>
    <variation>A</variation>
    <location>
        <position position="1658"/>
    </location>
</feature>
<feature type="mutagenesis site" description="Mildly decreased interaction with STAC3." evidence="17">
    <original>R</original>
    <variation>A</variation>
    <location>
        <position position="1659"/>
    </location>
</feature>
<feature type="mutagenesis site" description="Strongly reduced channel clustering at the junctional membrane." evidence="13">
    <original>LQAG</original>
    <variation>AAAA</variation>
    <location>
        <begin position="1681"/>
        <end position="1684"/>
    </location>
</feature>
<feature type="mutagenesis site" description="Strongly reduced channel clustering at the junctional membrane." evidence="13">
    <original>LRTL</original>
    <variation>AAAA</variation>
    <location>
        <begin position="1685"/>
        <end position="1688"/>
    </location>
</feature>
<feature type="mutagenesis site" description="Strongly reduced channel clustering at the junctional membrane." evidence="13">
    <original>RAIS</original>
    <variation>AAAA</variation>
    <location>
        <begin position="1697"/>
        <end position="1700"/>
    </location>
</feature>
<feature type="sequence conflict" description="In Ref. 4; AAA31182." evidence="26" ref="4">
    <original>N</original>
    <variation>S</variation>
    <location>
        <position position="1346"/>
    </location>
</feature>
<feature type="sequence conflict" description="In Ref. 4; AAA31182." evidence="26" ref="4">
    <original>H</original>
    <variation>S</variation>
    <location>
        <position position="1468"/>
    </location>
</feature>
<feature type="helix" evidence="28">
    <location>
        <begin position="451"/>
        <end position="475"/>
    </location>
</feature>
<feature type="helix" evidence="29">
    <location>
        <begin position="1647"/>
        <end position="1664"/>
    </location>
</feature>
<feature type="turn" evidence="29">
    <location>
        <begin position="1665"/>
        <end position="1667"/>
    </location>
</feature>